<gene>
    <name evidence="2" type="primary">HBB</name>
</gene>
<accession>D0VX08</accession>
<accession>P86192</accession>
<keyword id="KW-0002">3D-structure</keyword>
<keyword id="KW-0007">Acetylation</keyword>
<keyword id="KW-0349">Heme</keyword>
<keyword id="KW-0408">Iron</keyword>
<keyword id="KW-0479">Metal-binding</keyword>
<keyword id="KW-0561">Oxygen transport</keyword>
<keyword id="KW-0597">Phosphoprotein</keyword>
<keyword id="KW-1185">Reference proteome</keyword>
<keyword id="KW-0702">S-nitrosylation</keyword>
<keyword id="KW-0813">Transport</keyword>
<evidence type="ECO:0000250" key="1">
    <source>
        <dbReference type="UniProtKB" id="P02086"/>
    </source>
</evidence>
<evidence type="ECO:0000250" key="2">
    <source>
        <dbReference type="UniProtKB" id="P14391"/>
    </source>
</evidence>
<evidence type="ECO:0000250" key="3">
    <source>
        <dbReference type="UniProtKB" id="P68871"/>
    </source>
</evidence>
<evidence type="ECO:0000255" key="4">
    <source>
        <dbReference type="PROSITE-ProRule" id="PRU00238"/>
    </source>
</evidence>
<evidence type="ECO:0000305" key="5"/>
<evidence type="ECO:0000312" key="6">
    <source>
        <dbReference type="PDB" id="3FH9"/>
    </source>
</evidence>
<evidence type="ECO:0007829" key="7">
    <source>
        <dbReference type="PDB" id="3FH9"/>
    </source>
</evidence>
<sequence length="146" mass="15937">VHLSGEEKAAVTGLWGKVKVDEVGGEALGRLLVVYPWTQRFFDSFGDLSSASAVMGNPKVKAHGKKVLDSFSEGLQHLDNLKGTFAKLSELHCDKLHVDPENFRLLGNVLVCVLARHFGKEFTPQVQAAYQKVVAGVANALAHKYH</sequence>
<name>HBB_PTEVA</name>
<feature type="chain" id="PRO_0000398146" description="Hemoglobin subunit beta">
    <location>
        <begin position="1"/>
        <end position="146"/>
    </location>
</feature>
<feature type="domain" description="Globin" evidence="4">
    <location>
        <begin position="2"/>
        <end position="146"/>
    </location>
</feature>
<feature type="binding site" description="distal binding residue" evidence="5">
    <location>
        <position position="63"/>
    </location>
    <ligand>
        <name>heme b</name>
        <dbReference type="ChEBI" id="CHEBI:60344"/>
    </ligand>
    <ligandPart>
        <name>Fe</name>
        <dbReference type="ChEBI" id="CHEBI:18248"/>
    </ligandPart>
</feature>
<feature type="binding site" description="proximal binding residue" evidence="5">
    <location>
        <position position="92"/>
    </location>
    <ligand>
        <name>heme b</name>
        <dbReference type="ChEBI" id="CHEBI:60344"/>
    </ligand>
    <ligandPart>
        <name>Fe</name>
        <dbReference type="ChEBI" id="CHEBI:18248"/>
    </ligandPart>
</feature>
<feature type="modified residue" description="N-acetylvaline" evidence="1">
    <location>
        <position position="1"/>
    </location>
</feature>
<feature type="modified residue" description="Phosphothreonine" evidence="3">
    <location>
        <position position="12"/>
    </location>
</feature>
<feature type="modified residue" description="Phosphoserine" evidence="3">
    <location>
        <position position="44"/>
    </location>
</feature>
<feature type="modified residue" description="N6-acetyllysine" evidence="3">
    <location>
        <position position="59"/>
    </location>
</feature>
<feature type="modified residue" description="N6-acetyllysine" evidence="3">
    <location>
        <position position="82"/>
    </location>
</feature>
<feature type="modified residue" description="S-nitrosocysteine" evidence="3">
    <location>
        <position position="93"/>
    </location>
</feature>
<feature type="modified residue" description="N6-acetyllysine" evidence="3">
    <location>
        <position position="144"/>
    </location>
</feature>
<feature type="helix" evidence="7">
    <location>
        <begin position="5"/>
        <end position="15"/>
    </location>
</feature>
<feature type="turn" evidence="7">
    <location>
        <begin position="20"/>
        <end position="22"/>
    </location>
</feature>
<feature type="helix" evidence="7">
    <location>
        <begin position="23"/>
        <end position="34"/>
    </location>
</feature>
<feature type="helix" evidence="7">
    <location>
        <begin position="36"/>
        <end position="45"/>
    </location>
</feature>
<feature type="helix" evidence="7">
    <location>
        <begin position="51"/>
        <end position="55"/>
    </location>
</feature>
<feature type="helix" evidence="7">
    <location>
        <begin position="58"/>
        <end position="74"/>
    </location>
</feature>
<feature type="helix" evidence="7">
    <location>
        <begin position="81"/>
        <end position="84"/>
    </location>
</feature>
<feature type="helix" evidence="7">
    <location>
        <begin position="86"/>
        <end position="94"/>
    </location>
</feature>
<feature type="helix" evidence="7">
    <location>
        <begin position="101"/>
        <end position="118"/>
    </location>
</feature>
<feature type="helix" evidence="7">
    <location>
        <begin position="119"/>
        <end position="121"/>
    </location>
</feature>
<feature type="helix" evidence="7">
    <location>
        <begin position="124"/>
        <end position="142"/>
    </location>
</feature>
<feature type="helix" evidence="7">
    <location>
        <begin position="143"/>
        <end position="145"/>
    </location>
</feature>
<proteinExistence type="evidence at protein level"/>
<organism>
    <name type="scientific">Pteropus vampyrus</name>
    <name type="common">Large flying fox</name>
    <dbReference type="NCBI Taxonomy" id="132908"/>
    <lineage>
        <taxon>Eukaryota</taxon>
        <taxon>Metazoa</taxon>
        <taxon>Chordata</taxon>
        <taxon>Craniata</taxon>
        <taxon>Vertebrata</taxon>
        <taxon>Euteleostomi</taxon>
        <taxon>Mammalia</taxon>
        <taxon>Eutheria</taxon>
        <taxon>Laurasiatheria</taxon>
        <taxon>Chiroptera</taxon>
        <taxon>Yinpterochiroptera</taxon>
        <taxon>Pteropodoidea</taxon>
        <taxon>Pteropodidae</taxon>
        <taxon>Pteropodinae</taxon>
        <taxon>Pteropus</taxon>
    </lineage>
</organism>
<comment type="function">
    <text evidence="5">Involved in oxygen transport from the lung to the various peripheral tissues.</text>
</comment>
<comment type="subunit">
    <text evidence="5">Heterotetramer of two alpha chains and two beta chains.</text>
</comment>
<comment type="tissue specificity">
    <text evidence="5">Red blood cells.</text>
</comment>
<comment type="similarity">
    <text evidence="4">Belongs to the globin family.</text>
</comment>
<protein>
    <recommendedName>
        <fullName evidence="2">Hemoglobin subunit beta</fullName>
    </recommendedName>
    <alternativeName>
        <fullName evidence="2">Beta-globin</fullName>
    </alternativeName>
    <alternativeName>
        <fullName evidence="2 6">Hemoglobin beta chain</fullName>
    </alternativeName>
</protein>
<dbReference type="PDB" id="3FH9">
    <property type="method" value="X-ray"/>
    <property type="resolution" value="1.62 A"/>
    <property type="chains" value="B=1-146"/>
</dbReference>
<dbReference type="PDBsum" id="3FH9"/>
<dbReference type="SMR" id="D0VX08"/>
<dbReference type="EvolutionaryTrace" id="D0VX08"/>
<dbReference type="Proteomes" id="UP000515202">
    <property type="component" value="Unplaced"/>
</dbReference>
<dbReference type="GO" id="GO:0072562">
    <property type="term" value="C:blood microparticle"/>
    <property type="evidence" value="ECO:0007669"/>
    <property type="project" value="TreeGrafter"/>
</dbReference>
<dbReference type="GO" id="GO:0031838">
    <property type="term" value="C:haptoglobin-hemoglobin complex"/>
    <property type="evidence" value="ECO:0007669"/>
    <property type="project" value="TreeGrafter"/>
</dbReference>
<dbReference type="GO" id="GO:0005833">
    <property type="term" value="C:hemoglobin complex"/>
    <property type="evidence" value="ECO:0007669"/>
    <property type="project" value="InterPro"/>
</dbReference>
<dbReference type="GO" id="GO:0031720">
    <property type="term" value="F:haptoglobin binding"/>
    <property type="evidence" value="ECO:0007669"/>
    <property type="project" value="TreeGrafter"/>
</dbReference>
<dbReference type="GO" id="GO:0020037">
    <property type="term" value="F:heme binding"/>
    <property type="evidence" value="ECO:0007669"/>
    <property type="project" value="InterPro"/>
</dbReference>
<dbReference type="GO" id="GO:0031721">
    <property type="term" value="F:hemoglobin alpha binding"/>
    <property type="evidence" value="ECO:0007669"/>
    <property type="project" value="TreeGrafter"/>
</dbReference>
<dbReference type="GO" id="GO:0046872">
    <property type="term" value="F:metal ion binding"/>
    <property type="evidence" value="ECO:0007669"/>
    <property type="project" value="UniProtKB-KW"/>
</dbReference>
<dbReference type="GO" id="GO:0043177">
    <property type="term" value="F:organic acid binding"/>
    <property type="evidence" value="ECO:0007669"/>
    <property type="project" value="TreeGrafter"/>
</dbReference>
<dbReference type="GO" id="GO:0019825">
    <property type="term" value="F:oxygen binding"/>
    <property type="evidence" value="ECO:0007669"/>
    <property type="project" value="InterPro"/>
</dbReference>
<dbReference type="GO" id="GO:0005344">
    <property type="term" value="F:oxygen carrier activity"/>
    <property type="evidence" value="ECO:0007669"/>
    <property type="project" value="UniProtKB-KW"/>
</dbReference>
<dbReference type="GO" id="GO:0004601">
    <property type="term" value="F:peroxidase activity"/>
    <property type="evidence" value="ECO:0007669"/>
    <property type="project" value="TreeGrafter"/>
</dbReference>
<dbReference type="GO" id="GO:0042744">
    <property type="term" value="P:hydrogen peroxide catabolic process"/>
    <property type="evidence" value="ECO:0007669"/>
    <property type="project" value="TreeGrafter"/>
</dbReference>
<dbReference type="CDD" id="cd08925">
    <property type="entry name" value="Hb-beta-like"/>
    <property type="match status" value="1"/>
</dbReference>
<dbReference type="FunFam" id="1.10.490.10:FF:000001">
    <property type="entry name" value="Hemoglobin subunit beta"/>
    <property type="match status" value="1"/>
</dbReference>
<dbReference type="Gene3D" id="1.10.490.10">
    <property type="entry name" value="Globins"/>
    <property type="match status" value="1"/>
</dbReference>
<dbReference type="InterPro" id="IPR000971">
    <property type="entry name" value="Globin"/>
</dbReference>
<dbReference type="InterPro" id="IPR009050">
    <property type="entry name" value="Globin-like_sf"/>
</dbReference>
<dbReference type="InterPro" id="IPR012292">
    <property type="entry name" value="Globin/Proto"/>
</dbReference>
<dbReference type="InterPro" id="IPR002337">
    <property type="entry name" value="Hemoglobin_b"/>
</dbReference>
<dbReference type="InterPro" id="IPR050056">
    <property type="entry name" value="Hemoglobin_oxygen_transport"/>
</dbReference>
<dbReference type="PANTHER" id="PTHR11442">
    <property type="entry name" value="HEMOGLOBIN FAMILY MEMBER"/>
    <property type="match status" value="1"/>
</dbReference>
<dbReference type="PANTHER" id="PTHR11442:SF42">
    <property type="entry name" value="HEMOGLOBIN SUBUNIT BETA"/>
    <property type="match status" value="1"/>
</dbReference>
<dbReference type="Pfam" id="PF00042">
    <property type="entry name" value="Globin"/>
    <property type="match status" value="1"/>
</dbReference>
<dbReference type="PRINTS" id="PR00814">
    <property type="entry name" value="BETAHAEM"/>
</dbReference>
<dbReference type="SUPFAM" id="SSF46458">
    <property type="entry name" value="Globin-like"/>
    <property type="match status" value="1"/>
</dbReference>
<dbReference type="PROSITE" id="PS01033">
    <property type="entry name" value="GLOBIN"/>
    <property type="match status" value="1"/>
</dbReference>
<reference evidence="5 6" key="1">
    <citation type="submission" date="2008-12" db="PDB data bank">
        <title>Crystal structure determination of Indian flying fox (Pteropus giganteus) at 1.62 A resolution.</title>
        <authorList>
            <person name="Moorthy P.S."/>
            <person name="Neelagandan K."/>
            <person name="Balasubramanian M."/>
            <person name="Thenmozhi M."/>
            <person name="Ponnuswamy M.N."/>
        </authorList>
    </citation>
    <scope>X-RAY CRYSTALLOGRAPHY (1.62 ANGSTROMS)</scope>
</reference>